<comment type="function">
    <text evidence="1">The RuvA-RuvB-RuvC complex processes Holliday junction (HJ) DNA during genetic recombination and DNA repair, while the RuvA-RuvB complex plays an important role in the rescue of blocked DNA replication forks via replication fork reversal (RFR). RuvA specifically binds to HJ cruciform DNA, conferring on it an open structure. The RuvB hexamer acts as an ATP-dependent pump, pulling dsDNA into and through the RuvAB complex. RuvB forms 2 homohexamers on either side of HJ DNA bound by 1 or 2 RuvA tetramers; 4 subunits per hexamer contact DNA at a time. Coordinated motions by a converter formed by DNA-disengaged RuvB subunits stimulates ATP hydrolysis and nucleotide exchange. Immobilization of the converter enables RuvB to convert the ATP-contained energy into a lever motion, pulling 2 nucleotides of DNA out of the RuvA tetramer per ATP hydrolyzed, thus driving DNA branch migration. The RuvB motors rotate together with the DNA substrate, which together with the progressing nucleotide cycle form the mechanistic basis for DNA recombination by continuous HJ branch migration. Branch migration allows RuvC to scan DNA until it finds its consensus sequence, where it cleaves and resolves cruciform DNA.</text>
</comment>
<comment type="catalytic activity">
    <reaction evidence="1">
        <text>ATP + H2O = ADP + phosphate + H(+)</text>
        <dbReference type="Rhea" id="RHEA:13065"/>
        <dbReference type="ChEBI" id="CHEBI:15377"/>
        <dbReference type="ChEBI" id="CHEBI:15378"/>
        <dbReference type="ChEBI" id="CHEBI:30616"/>
        <dbReference type="ChEBI" id="CHEBI:43474"/>
        <dbReference type="ChEBI" id="CHEBI:456216"/>
    </reaction>
</comment>
<comment type="subunit">
    <text evidence="1">Homohexamer. Forms an RuvA(8)-RuvB(12)-Holliday junction (HJ) complex. HJ DNA is sandwiched between 2 RuvA tetramers; dsDNA enters through RuvA and exits via RuvB. An RuvB hexamer assembles on each DNA strand where it exits the tetramer. Each RuvB hexamer is contacted by two RuvA subunits (via domain III) on 2 adjacent RuvB subunits; this complex drives branch migration. In the full resolvosome a probable DNA-RuvA(4)-RuvB(12)-RuvC(2) complex forms which resolves the HJ.</text>
</comment>
<comment type="subcellular location">
    <subcellularLocation>
        <location evidence="1">Cytoplasm</location>
    </subcellularLocation>
</comment>
<comment type="domain">
    <text evidence="1">Has 3 domains, the large (RuvB-L) and small ATPase (RuvB-S) domains and the C-terminal head (RuvB-H) domain. The head domain binds DNA, while the ATPase domains jointly bind ATP, ADP or are empty depending on the state of the subunit in the translocation cycle. During a single DNA translocation step the structure of each domain remains the same, but their relative positions change.</text>
</comment>
<comment type="similarity">
    <text evidence="1">Belongs to the RuvB family.</text>
</comment>
<sequence>MSEAARLIAPEKRGEDVDATLRPQTLDEFTGQAEARANLKIFIEAARNRGEALDHVLFVGPPGLGKTTLAQIMAKELGVNFRSTSGPVIAKAGDLAALLTNLEERDVLFIDEIHRLNPAVEEILYPAMEDFQLDLIIGEGPSARSVKIDLAKFTLVAATTRLGLLTTPLRDRFGIPVRLNFYTVEELELIVRRGARLMGLGMTDEGAREIARRARGTPRIAGRLLRRVRDFAEVARAEAVTRQIADEALTRLLVDSMGLDQLDRRYLTMIAQNFGGGPVGIETIAAGLSEPRDAIEDIIEPYLIQQGFIQRTPRGRVLTANAWKHLGLNPPKDVEASQFRLTLEDD</sequence>
<gene>
    <name evidence="1" type="primary">ruvB</name>
    <name type="ordered locus">Smed_2637</name>
</gene>
<reference key="1">
    <citation type="submission" date="2007-06" db="EMBL/GenBank/DDBJ databases">
        <title>Complete sequence of Sinorhizobium medicae WSM419 chromosome.</title>
        <authorList>
            <consortium name="US DOE Joint Genome Institute"/>
            <person name="Copeland A."/>
            <person name="Lucas S."/>
            <person name="Lapidus A."/>
            <person name="Barry K."/>
            <person name="Glavina del Rio T."/>
            <person name="Dalin E."/>
            <person name="Tice H."/>
            <person name="Pitluck S."/>
            <person name="Chain P."/>
            <person name="Malfatti S."/>
            <person name="Shin M."/>
            <person name="Vergez L."/>
            <person name="Schmutz J."/>
            <person name="Larimer F."/>
            <person name="Land M."/>
            <person name="Hauser L."/>
            <person name="Kyrpides N."/>
            <person name="Mikhailova N."/>
            <person name="Reeve W.G."/>
            <person name="Richardson P."/>
        </authorList>
    </citation>
    <scope>NUCLEOTIDE SEQUENCE [LARGE SCALE GENOMIC DNA]</scope>
    <source>
        <strain>WSM419</strain>
    </source>
</reference>
<name>RUVB_SINMW</name>
<keyword id="KW-0067">ATP-binding</keyword>
<keyword id="KW-0963">Cytoplasm</keyword>
<keyword id="KW-0227">DNA damage</keyword>
<keyword id="KW-0233">DNA recombination</keyword>
<keyword id="KW-0234">DNA repair</keyword>
<keyword id="KW-0238">DNA-binding</keyword>
<keyword id="KW-0378">Hydrolase</keyword>
<keyword id="KW-0547">Nucleotide-binding</keyword>
<organism>
    <name type="scientific">Sinorhizobium medicae (strain WSM419)</name>
    <name type="common">Ensifer medicae</name>
    <dbReference type="NCBI Taxonomy" id="366394"/>
    <lineage>
        <taxon>Bacteria</taxon>
        <taxon>Pseudomonadati</taxon>
        <taxon>Pseudomonadota</taxon>
        <taxon>Alphaproteobacteria</taxon>
        <taxon>Hyphomicrobiales</taxon>
        <taxon>Rhizobiaceae</taxon>
        <taxon>Sinorhizobium/Ensifer group</taxon>
        <taxon>Sinorhizobium</taxon>
    </lineage>
</organism>
<feature type="chain" id="PRO_1000001482" description="Holliday junction branch migration complex subunit RuvB">
    <location>
        <begin position="1"/>
        <end position="346"/>
    </location>
</feature>
<feature type="region of interest" description="Large ATPase domain (RuvB-L)" evidence="1">
    <location>
        <begin position="1"/>
        <end position="182"/>
    </location>
</feature>
<feature type="region of interest" description="Small ATPAse domain (RuvB-S)" evidence="1">
    <location>
        <begin position="183"/>
        <end position="253"/>
    </location>
</feature>
<feature type="region of interest" description="Head domain (RuvB-H)" evidence="1">
    <location>
        <begin position="256"/>
        <end position="346"/>
    </location>
</feature>
<feature type="binding site" evidence="1">
    <location>
        <position position="21"/>
    </location>
    <ligand>
        <name>ATP</name>
        <dbReference type="ChEBI" id="CHEBI:30616"/>
    </ligand>
</feature>
<feature type="binding site" evidence="1">
    <location>
        <position position="22"/>
    </location>
    <ligand>
        <name>ATP</name>
        <dbReference type="ChEBI" id="CHEBI:30616"/>
    </ligand>
</feature>
<feature type="binding site" evidence="1">
    <location>
        <position position="63"/>
    </location>
    <ligand>
        <name>ATP</name>
        <dbReference type="ChEBI" id="CHEBI:30616"/>
    </ligand>
</feature>
<feature type="binding site" evidence="1">
    <location>
        <position position="66"/>
    </location>
    <ligand>
        <name>ATP</name>
        <dbReference type="ChEBI" id="CHEBI:30616"/>
    </ligand>
</feature>
<feature type="binding site" evidence="1">
    <location>
        <position position="67"/>
    </location>
    <ligand>
        <name>ATP</name>
        <dbReference type="ChEBI" id="CHEBI:30616"/>
    </ligand>
</feature>
<feature type="binding site" evidence="1">
    <location>
        <position position="67"/>
    </location>
    <ligand>
        <name>Mg(2+)</name>
        <dbReference type="ChEBI" id="CHEBI:18420"/>
    </ligand>
</feature>
<feature type="binding site" evidence="1">
    <location>
        <position position="68"/>
    </location>
    <ligand>
        <name>ATP</name>
        <dbReference type="ChEBI" id="CHEBI:30616"/>
    </ligand>
</feature>
<feature type="binding site" evidence="1">
    <location>
        <begin position="129"/>
        <end position="131"/>
    </location>
    <ligand>
        <name>ATP</name>
        <dbReference type="ChEBI" id="CHEBI:30616"/>
    </ligand>
</feature>
<feature type="binding site" evidence="1">
    <location>
        <position position="172"/>
    </location>
    <ligand>
        <name>ATP</name>
        <dbReference type="ChEBI" id="CHEBI:30616"/>
    </ligand>
</feature>
<feature type="binding site" evidence="1">
    <location>
        <position position="182"/>
    </location>
    <ligand>
        <name>ATP</name>
        <dbReference type="ChEBI" id="CHEBI:30616"/>
    </ligand>
</feature>
<feature type="binding site" evidence="1">
    <location>
        <position position="219"/>
    </location>
    <ligand>
        <name>ATP</name>
        <dbReference type="ChEBI" id="CHEBI:30616"/>
    </ligand>
</feature>
<feature type="binding site" evidence="1">
    <location>
        <position position="292"/>
    </location>
    <ligand>
        <name>DNA</name>
        <dbReference type="ChEBI" id="CHEBI:16991"/>
    </ligand>
</feature>
<feature type="binding site" evidence="1">
    <location>
        <position position="311"/>
    </location>
    <ligand>
        <name>DNA</name>
        <dbReference type="ChEBI" id="CHEBI:16991"/>
    </ligand>
</feature>
<feature type="binding site" evidence="1">
    <location>
        <position position="316"/>
    </location>
    <ligand>
        <name>DNA</name>
        <dbReference type="ChEBI" id="CHEBI:16991"/>
    </ligand>
</feature>
<accession>A6UCT7</accession>
<evidence type="ECO:0000255" key="1">
    <source>
        <dbReference type="HAMAP-Rule" id="MF_00016"/>
    </source>
</evidence>
<dbReference type="EC" id="3.6.4.-" evidence="1"/>
<dbReference type="EMBL" id="CP000738">
    <property type="protein sequence ID" value="ABR61467.1"/>
    <property type="molecule type" value="Genomic_DNA"/>
</dbReference>
<dbReference type="RefSeq" id="WP_012066856.1">
    <property type="nucleotide sequence ID" value="NC_009636.1"/>
</dbReference>
<dbReference type="RefSeq" id="YP_001328302.1">
    <property type="nucleotide sequence ID" value="NC_009636.1"/>
</dbReference>
<dbReference type="SMR" id="A6UCT7"/>
<dbReference type="STRING" id="366394.Smed_2637"/>
<dbReference type="GeneID" id="61611833"/>
<dbReference type="KEGG" id="smd:Smed_2637"/>
<dbReference type="PATRIC" id="fig|366394.8.peg.5835"/>
<dbReference type="eggNOG" id="COG2255">
    <property type="taxonomic scope" value="Bacteria"/>
</dbReference>
<dbReference type="HOGENOM" id="CLU_055599_1_0_5"/>
<dbReference type="OrthoDB" id="9804478at2"/>
<dbReference type="Proteomes" id="UP000001108">
    <property type="component" value="Chromosome"/>
</dbReference>
<dbReference type="GO" id="GO:0005737">
    <property type="term" value="C:cytoplasm"/>
    <property type="evidence" value="ECO:0007669"/>
    <property type="project" value="UniProtKB-SubCell"/>
</dbReference>
<dbReference type="GO" id="GO:0048476">
    <property type="term" value="C:Holliday junction resolvase complex"/>
    <property type="evidence" value="ECO:0007669"/>
    <property type="project" value="UniProtKB-UniRule"/>
</dbReference>
<dbReference type="GO" id="GO:0005524">
    <property type="term" value="F:ATP binding"/>
    <property type="evidence" value="ECO:0007669"/>
    <property type="project" value="UniProtKB-UniRule"/>
</dbReference>
<dbReference type="GO" id="GO:0016887">
    <property type="term" value="F:ATP hydrolysis activity"/>
    <property type="evidence" value="ECO:0007669"/>
    <property type="project" value="InterPro"/>
</dbReference>
<dbReference type="GO" id="GO:0000400">
    <property type="term" value="F:four-way junction DNA binding"/>
    <property type="evidence" value="ECO:0007669"/>
    <property type="project" value="UniProtKB-UniRule"/>
</dbReference>
<dbReference type="GO" id="GO:0009378">
    <property type="term" value="F:four-way junction helicase activity"/>
    <property type="evidence" value="ECO:0007669"/>
    <property type="project" value="InterPro"/>
</dbReference>
<dbReference type="GO" id="GO:0006310">
    <property type="term" value="P:DNA recombination"/>
    <property type="evidence" value="ECO:0007669"/>
    <property type="project" value="UniProtKB-UniRule"/>
</dbReference>
<dbReference type="GO" id="GO:0006281">
    <property type="term" value="P:DNA repair"/>
    <property type="evidence" value="ECO:0007669"/>
    <property type="project" value="UniProtKB-UniRule"/>
</dbReference>
<dbReference type="CDD" id="cd00009">
    <property type="entry name" value="AAA"/>
    <property type="match status" value="1"/>
</dbReference>
<dbReference type="Gene3D" id="1.10.8.60">
    <property type="match status" value="1"/>
</dbReference>
<dbReference type="Gene3D" id="3.40.50.300">
    <property type="entry name" value="P-loop containing nucleotide triphosphate hydrolases"/>
    <property type="match status" value="1"/>
</dbReference>
<dbReference type="Gene3D" id="1.10.10.10">
    <property type="entry name" value="Winged helix-like DNA-binding domain superfamily/Winged helix DNA-binding domain"/>
    <property type="match status" value="1"/>
</dbReference>
<dbReference type="HAMAP" id="MF_00016">
    <property type="entry name" value="DNA_HJ_migration_RuvB"/>
    <property type="match status" value="1"/>
</dbReference>
<dbReference type="InterPro" id="IPR003593">
    <property type="entry name" value="AAA+_ATPase"/>
</dbReference>
<dbReference type="InterPro" id="IPR041445">
    <property type="entry name" value="AAA_lid_4"/>
</dbReference>
<dbReference type="InterPro" id="IPR000641">
    <property type="entry name" value="CbxX/CfxQ"/>
</dbReference>
<dbReference type="InterPro" id="IPR004605">
    <property type="entry name" value="DNA_helicase_Holl-junc_RuvB"/>
</dbReference>
<dbReference type="InterPro" id="IPR027417">
    <property type="entry name" value="P-loop_NTPase"/>
</dbReference>
<dbReference type="InterPro" id="IPR008824">
    <property type="entry name" value="RuvB-like_N"/>
</dbReference>
<dbReference type="InterPro" id="IPR008823">
    <property type="entry name" value="RuvB_C"/>
</dbReference>
<dbReference type="InterPro" id="IPR036388">
    <property type="entry name" value="WH-like_DNA-bd_sf"/>
</dbReference>
<dbReference type="InterPro" id="IPR036390">
    <property type="entry name" value="WH_DNA-bd_sf"/>
</dbReference>
<dbReference type="NCBIfam" id="NF000868">
    <property type="entry name" value="PRK00080.1"/>
    <property type="match status" value="1"/>
</dbReference>
<dbReference type="NCBIfam" id="TIGR00635">
    <property type="entry name" value="ruvB"/>
    <property type="match status" value="1"/>
</dbReference>
<dbReference type="PANTHER" id="PTHR42848">
    <property type="match status" value="1"/>
</dbReference>
<dbReference type="PANTHER" id="PTHR42848:SF1">
    <property type="entry name" value="HOLLIDAY JUNCTION BRANCH MIGRATION COMPLEX SUBUNIT RUVB"/>
    <property type="match status" value="1"/>
</dbReference>
<dbReference type="Pfam" id="PF17864">
    <property type="entry name" value="AAA_lid_4"/>
    <property type="match status" value="1"/>
</dbReference>
<dbReference type="Pfam" id="PF05491">
    <property type="entry name" value="RuvB_C"/>
    <property type="match status" value="1"/>
</dbReference>
<dbReference type="Pfam" id="PF05496">
    <property type="entry name" value="RuvB_N"/>
    <property type="match status" value="1"/>
</dbReference>
<dbReference type="PRINTS" id="PR00819">
    <property type="entry name" value="CBXCFQXSUPER"/>
</dbReference>
<dbReference type="SMART" id="SM00382">
    <property type="entry name" value="AAA"/>
    <property type="match status" value="1"/>
</dbReference>
<dbReference type="SUPFAM" id="SSF52540">
    <property type="entry name" value="P-loop containing nucleoside triphosphate hydrolases"/>
    <property type="match status" value="1"/>
</dbReference>
<dbReference type="SUPFAM" id="SSF46785">
    <property type="entry name" value="Winged helix' DNA-binding domain"/>
    <property type="match status" value="1"/>
</dbReference>
<protein>
    <recommendedName>
        <fullName evidence="1">Holliday junction branch migration complex subunit RuvB</fullName>
        <ecNumber evidence="1">3.6.4.-</ecNumber>
    </recommendedName>
</protein>
<proteinExistence type="inferred from homology"/>